<keyword id="KW-0963">Cytoplasm</keyword>
<keyword id="KW-1185">Reference proteome</keyword>
<gene>
    <name type="primary">SIP5</name>
    <name type="ordered locus">CAALFM_C105910WA</name>
    <name type="ORF">CaO19.2458</name>
    <name type="ORF">CaO19.9995</name>
</gene>
<sequence length="514" mass="57246">MGNVPAKETRSRSSSSVSDYRNSTSSTTHGSSSSTSSKRRNTTSSLYGIVSSATSSSNHHNRSGSHDLRKLKRQEEKEQAQIQHYMQLIVKFNESVDGGYLAPFGTYKSNLDYDCDIVRNLIINRKLSPFFTPLQDFDESWTDDELCILLGQLTLHALEPGYNNDDDEEEDDIDNHKIHKSANYYKRQEEKAKLKSLINKVKELQKDEEQKYFDEKQKNFNKDCPSRDLLLRLYRNASECPICFLYYPKHLNISRCCLQPICSECFVQIKRLDPHPPHDDQSNQEAGELPHRLISEPANCPYCASPDFGVTYEPPIDIHTGIDGIKPGDYRVSPPIVEESESAIDDDGDNSSNGSTTGKGEITSNSATAAAAATATPPPVNSISPKKNSLKKRRGSLAANAPGVITIDMIRPDWETKLNSARSKLARKAATASAIHASNLLLDDNSNSNSNNGNGNNSGNNRRRNNSSSGRSGSFGGSNNRYATVEQRMIEEAMRLSILDEEERKRNANKENKK</sequence>
<name>SIP5_CANAL</name>
<reference key="1">
    <citation type="journal article" date="2004" name="Proc. Natl. Acad. Sci. U.S.A.">
        <title>The diploid genome sequence of Candida albicans.</title>
        <authorList>
            <person name="Jones T."/>
            <person name="Federspiel N.A."/>
            <person name="Chibana H."/>
            <person name="Dungan J."/>
            <person name="Kalman S."/>
            <person name="Magee B.B."/>
            <person name="Newport G."/>
            <person name="Thorstenson Y.R."/>
            <person name="Agabian N."/>
            <person name="Magee P.T."/>
            <person name="Davis R.W."/>
            <person name="Scherer S."/>
        </authorList>
    </citation>
    <scope>NUCLEOTIDE SEQUENCE [LARGE SCALE GENOMIC DNA]</scope>
    <source>
        <strain>SC5314 / ATCC MYA-2876</strain>
    </source>
</reference>
<reference key="2">
    <citation type="journal article" date="2007" name="Genome Biol.">
        <title>Assembly of the Candida albicans genome into sixteen supercontigs aligned on the eight chromosomes.</title>
        <authorList>
            <person name="van het Hoog M."/>
            <person name="Rast T.J."/>
            <person name="Martchenko M."/>
            <person name="Grindle S."/>
            <person name="Dignard D."/>
            <person name="Hogues H."/>
            <person name="Cuomo C."/>
            <person name="Berriman M."/>
            <person name="Scherer S."/>
            <person name="Magee B.B."/>
            <person name="Whiteway M."/>
            <person name="Chibana H."/>
            <person name="Nantel A."/>
            <person name="Magee P.T."/>
        </authorList>
    </citation>
    <scope>GENOME REANNOTATION</scope>
    <source>
        <strain>SC5314 / ATCC MYA-2876</strain>
    </source>
</reference>
<reference key="3">
    <citation type="journal article" date="2013" name="Genome Biol.">
        <title>Assembly of a phased diploid Candida albicans genome facilitates allele-specific measurements and provides a simple model for repeat and indel structure.</title>
        <authorList>
            <person name="Muzzey D."/>
            <person name="Schwartz K."/>
            <person name="Weissman J.S."/>
            <person name="Sherlock G."/>
        </authorList>
    </citation>
    <scope>NUCLEOTIDE SEQUENCE [LARGE SCALE GENOMIC DNA]</scope>
    <scope>GENOME REANNOTATION</scope>
    <source>
        <strain>SC5314 / ATCC MYA-2876</strain>
    </source>
</reference>
<dbReference type="EMBL" id="CP017623">
    <property type="protein sequence ID" value="AOW26255.1"/>
    <property type="molecule type" value="Genomic_DNA"/>
</dbReference>
<dbReference type="RefSeq" id="XP_718480.2">
    <property type="nucleotide sequence ID" value="XM_713387.2"/>
</dbReference>
<dbReference type="BioGRID" id="1222848">
    <property type="interactions" value="1"/>
</dbReference>
<dbReference type="FunCoup" id="Q5AA26">
    <property type="interactions" value="48"/>
</dbReference>
<dbReference type="STRING" id="237561.Q5AA26"/>
<dbReference type="EnsemblFungi" id="C1_05910W_A-T">
    <property type="protein sequence ID" value="C1_05910W_A-T-p1"/>
    <property type="gene ID" value="C1_05910W_A"/>
</dbReference>
<dbReference type="GeneID" id="3639865"/>
<dbReference type="KEGG" id="cal:CAALFM_C105910WA"/>
<dbReference type="CGD" id="CAL0000178486">
    <property type="gene designation" value="SIP5"/>
</dbReference>
<dbReference type="VEuPathDB" id="FungiDB:C1_05910W_A"/>
<dbReference type="eggNOG" id="KOG2789">
    <property type="taxonomic scope" value="Eukaryota"/>
</dbReference>
<dbReference type="HOGENOM" id="CLU_009068_0_0_1"/>
<dbReference type="InParanoid" id="Q5AA26"/>
<dbReference type="OrthoDB" id="21471at2759"/>
<dbReference type="PRO" id="PR:Q5AA26"/>
<dbReference type="Proteomes" id="UP000000559">
    <property type="component" value="Chromosome 1"/>
</dbReference>
<dbReference type="GO" id="GO:0005737">
    <property type="term" value="C:cytoplasm"/>
    <property type="evidence" value="ECO:0007669"/>
    <property type="project" value="UniProtKB-SubCell"/>
</dbReference>
<dbReference type="GO" id="GO:0042149">
    <property type="term" value="P:cellular response to glucose starvation"/>
    <property type="evidence" value="ECO:0007669"/>
    <property type="project" value="EnsemblFungi"/>
</dbReference>
<dbReference type="CDD" id="cd24139">
    <property type="entry name" value="SIP5-like"/>
    <property type="match status" value="1"/>
</dbReference>
<dbReference type="InterPro" id="IPR039301">
    <property type="entry name" value="Sip5/DA2"/>
</dbReference>
<dbReference type="PANTHER" id="PTHR31315">
    <property type="entry name" value="PROTEIN SIP5"/>
    <property type="match status" value="1"/>
</dbReference>
<dbReference type="PANTHER" id="PTHR31315:SF1">
    <property type="entry name" value="PROTEIN SIP5"/>
    <property type="match status" value="1"/>
</dbReference>
<proteinExistence type="inferred from homology"/>
<comment type="function">
    <text evidence="1">May negatively regulate the SNF1 kinase.</text>
</comment>
<comment type="subcellular location">
    <subcellularLocation>
        <location evidence="1">Cytoplasm</location>
    </subcellularLocation>
</comment>
<comment type="similarity">
    <text evidence="3">Belongs to the SIP5 family.</text>
</comment>
<accession>Q5AA26</accession>
<accession>A0A1D8PDN7</accession>
<accession>Q5AAB3</accession>
<evidence type="ECO:0000250" key="1"/>
<evidence type="ECO:0000256" key="2">
    <source>
        <dbReference type="SAM" id="MobiDB-lite"/>
    </source>
</evidence>
<evidence type="ECO:0000305" key="3"/>
<feature type="chain" id="PRO_0000333432" description="Protein SIP5">
    <location>
        <begin position="1"/>
        <end position="514"/>
    </location>
</feature>
<feature type="region of interest" description="Disordered" evidence="2">
    <location>
        <begin position="1"/>
        <end position="79"/>
    </location>
</feature>
<feature type="region of interest" description="Disordered" evidence="2">
    <location>
        <begin position="340"/>
        <end position="396"/>
    </location>
</feature>
<feature type="region of interest" description="Disordered" evidence="2">
    <location>
        <begin position="442"/>
        <end position="481"/>
    </location>
</feature>
<feature type="compositionally biased region" description="Low complexity" evidence="2">
    <location>
        <begin position="12"/>
        <end position="36"/>
    </location>
</feature>
<feature type="compositionally biased region" description="Basic and acidic residues" evidence="2">
    <location>
        <begin position="64"/>
        <end position="79"/>
    </location>
</feature>
<feature type="compositionally biased region" description="Acidic residues" evidence="2">
    <location>
        <begin position="340"/>
        <end position="349"/>
    </location>
</feature>
<feature type="compositionally biased region" description="Low complexity" evidence="2">
    <location>
        <begin position="445"/>
        <end position="481"/>
    </location>
</feature>
<organism>
    <name type="scientific">Candida albicans (strain SC5314 / ATCC MYA-2876)</name>
    <name type="common">Yeast</name>
    <dbReference type="NCBI Taxonomy" id="237561"/>
    <lineage>
        <taxon>Eukaryota</taxon>
        <taxon>Fungi</taxon>
        <taxon>Dikarya</taxon>
        <taxon>Ascomycota</taxon>
        <taxon>Saccharomycotina</taxon>
        <taxon>Pichiomycetes</taxon>
        <taxon>Debaryomycetaceae</taxon>
        <taxon>Candida/Lodderomyces clade</taxon>
        <taxon>Candida</taxon>
    </lineage>
</organism>
<protein>
    <recommendedName>
        <fullName>Protein SIP5</fullName>
    </recommendedName>
</protein>